<reference key="1">
    <citation type="journal article" date="2003" name="Science">
        <title>Role of mobile DNA in the evolution of vancomycin-resistant Enterococcus faecalis.</title>
        <authorList>
            <person name="Paulsen I.T."/>
            <person name="Banerjei L."/>
            <person name="Myers G.S.A."/>
            <person name="Nelson K.E."/>
            <person name="Seshadri R."/>
            <person name="Read T.D."/>
            <person name="Fouts D.E."/>
            <person name="Eisen J.A."/>
            <person name="Gill S.R."/>
            <person name="Heidelberg J.F."/>
            <person name="Tettelin H."/>
            <person name="Dodson R.J."/>
            <person name="Umayam L.A."/>
            <person name="Brinkac L.M."/>
            <person name="Beanan M.J."/>
            <person name="Daugherty S.C."/>
            <person name="DeBoy R.T."/>
            <person name="Durkin S.A."/>
            <person name="Kolonay J.F."/>
            <person name="Madupu R."/>
            <person name="Nelson W.C."/>
            <person name="Vamathevan J.J."/>
            <person name="Tran B."/>
            <person name="Upton J."/>
            <person name="Hansen T."/>
            <person name="Shetty J."/>
            <person name="Khouri H.M."/>
            <person name="Utterback T.R."/>
            <person name="Radune D."/>
            <person name="Ketchum K.A."/>
            <person name="Dougherty B.A."/>
            <person name="Fraser C.M."/>
        </authorList>
    </citation>
    <scope>NUCLEOTIDE SEQUENCE [LARGE SCALE GENOMIC DNA]</scope>
    <source>
        <strain>ATCC 700802 / V583</strain>
    </source>
</reference>
<evidence type="ECO:0000255" key="1">
    <source>
        <dbReference type="HAMAP-Rule" id="MF_00106"/>
    </source>
</evidence>
<evidence type="ECO:0007829" key="2">
    <source>
        <dbReference type="PDB" id="1TZ9"/>
    </source>
</evidence>
<comment type="function">
    <text evidence="1">Catalyzes the dehydration of D-mannonate.</text>
</comment>
<comment type="catalytic activity">
    <reaction evidence="1">
        <text>D-mannonate = 2-dehydro-3-deoxy-D-gluconate + H2O</text>
        <dbReference type="Rhea" id="RHEA:20097"/>
        <dbReference type="ChEBI" id="CHEBI:15377"/>
        <dbReference type="ChEBI" id="CHEBI:17767"/>
        <dbReference type="ChEBI" id="CHEBI:57990"/>
        <dbReference type="EC" id="4.2.1.8"/>
    </reaction>
</comment>
<comment type="cofactor">
    <cofactor evidence="1">
        <name>Fe(2+)</name>
        <dbReference type="ChEBI" id="CHEBI:29033"/>
    </cofactor>
    <cofactor evidence="1">
        <name>Mn(2+)</name>
        <dbReference type="ChEBI" id="CHEBI:29035"/>
    </cofactor>
</comment>
<comment type="pathway">
    <text evidence="1">Carbohydrate metabolism; pentose and glucuronate interconversion.</text>
</comment>
<comment type="similarity">
    <text evidence="1">Belongs to the mannonate dehydratase family.</text>
</comment>
<feature type="chain" id="PRO_0000170673" description="Mannonate dehydratase">
    <location>
        <begin position="1"/>
        <end position="357"/>
    </location>
</feature>
<feature type="turn" evidence="2">
    <location>
        <begin position="10"/>
        <end position="12"/>
    </location>
</feature>
<feature type="helix" evidence="2">
    <location>
        <begin position="17"/>
        <end position="20"/>
    </location>
</feature>
<feature type="strand" evidence="2">
    <location>
        <begin position="28"/>
        <end position="31"/>
    </location>
</feature>
<feature type="strand" evidence="2">
    <location>
        <begin position="34"/>
        <end position="36"/>
    </location>
</feature>
<feature type="helix" evidence="2">
    <location>
        <begin position="44"/>
        <end position="56"/>
    </location>
</feature>
<feature type="strand" evidence="2">
    <location>
        <begin position="60"/>
        <end position="64"/>
    </location>
</feature>
<feature type="helix" evidence="2">
    <location>
        <begin position="71"/>
        <end position="75"/>
    </location>
</feature>
<feature type="helix" evidence="2">
    <location>
        <begin position="80"/>
        <end position="96"/>
    </location>
</feature>
<feature type="strand" evidence="2">
    <location>
        <begin position="101"/>
        <end position="104"/>
    </location>
</feature>
<feature type="strand" evidence="2">
    <location>
        <begin position="115"/>
        <end position="120"/>
    </location>
</feature>
<feature type="strand" evidence="2">
    <location>
        <begin position="126"/>
        <end position="131"/>
    </location>
</feature>
<feature type="helix" evidence="2">
    <location>
        <begin position="132"/>
        <end position="136"/>
    </location>
</feature>
<feature type="helix" evidence="2">
    <location>
        <begin position="140"/>
        <end position="146"/>
    </location>
</feature>
<feature type="helix" evidence="2">
    <location>
        <begin position="161"/>
        <end position="173"/>
    </location>
</feature>
<feature type="helix" evidence="2">
    <location>
        <begin position="179"/>
        <end position="200"/>
    </location>
</feature>
<feature type="strand" evidence="2">
    <location>
        <begin position="203"/>
        <end position="206"/>
    </location>
</feature>
<feature type="strand" evidence="2">
    <location>
        <begin position="210"/>
        <end position="213"/>
    </location>
</feature>
<feature type="helix" evidence="2">
    <location>
        <begin position="225"/>
        <end position="234"/>
    </location>
</feature>
<feature type="helix" evidence="2">
    <location>
        <begin position="248"/>
        <end position="251"/>
    </location>
</feature>
<feature type="helix" evidence="2">
    <location>
        <begin position="257"/>
        <end position="264"/>
    </location>
</feature>
<feature type="helix" evidence="2">
    <location>
        <begin position="265"/>
        <end position="267"/>
    </location>
</feature>
<feature type="strand" evidence="2">
    <location>
        <begin position="271"/>
        <end position="273"/>
    </location>
</feature>
<feature type="strand" evidence="2">
    <location>
        <begin position="276"/>
        <end position="278"/>
    </location>
</feature>
<feature type="strand" evidence="2">
    <location>
        <begin position="280"/>
        <end position="286"/>
    </location>
</feature>
<feature type="helix" evidence="2">
    <location>
        <begin position="291"/>
        <end position="293"/>
    </location>
</feature>
<feature type="strand" evidence="2">
    <location>
        <begin position="294"/>
        <end position="296"/>
    </location>
</feature>
<feature type="helix" evidence="2">
    <location>
        <begin position="298"/>
        <end position="308"/>
    </location>
</feature>
<feature type="strand" evidence="2">
    <location>
        <begin position="312"/>
        <end position="316"/>
    </location>
</feature>
<feature type="strand" evidence="2">
    <location>
        <begin position="331"/>
        <end position="333"/>
    </location>
</feature>
<feature type="helix" evidence="2">
    <location>
        <begin position="334"/>
        <end position="340"/>
    </location>
</feature>
<feature type="helix" evidence="2">
    <location>
        <begin position="342"/>
        <end position="351"/>
    </location>
</feature>
<name>UXUA_ENTFA</name>
<sequence length="357" mass="40282">MKWGFRWYGAAGDAIPLKHIRQIPGITGVVGTLLNKLPGDVWTVAEIQALKQSVEQEGLALLGIESVAIHDAIKAGTDQRDHYIDNYRQTLRNLGKCGISLVCYSFKPIFGWAKTDLAYENEDGSLSLLFDQAVVENMQPEDMYQLIHSQSKGFRLPGWEEERLQQFQELKAMYAGVTEEDLVENLRYFLERVIPVCEEENIKMGIHPDDPPWEIFGLPRITKNLADLKRILSLVDSPANGITFCTGSLGADPTNDLPTMIREIGHRINFVHFRNVKYLGEHRFEETAHPSVAGSLDMAELMQALVDVGYEGVIRPDHGRAIWDEKAMPGYGLYDRAMGLTYIQGLYEATKAKQNRK</sequence>
<protein>
    <recommendedName>
        <fullName evidence="1">Mannonate dehydratase</fullName>
        <ecNumber evidence="1">4.2.1.8</ecNumber>
    </recommendedName>
    <alternativeName>
        <fullName evidence="1">D-mannonate hydro-lyase</fullName>
    </alternativeName>
</protein>
<organism>
    <name type="scientific">Enterococcus faecalis (strain ATCC 700802 / V583)</name>
    <dbReference type="NCBI Taxonomy" id="226185"/>
    <lineage>
        <taxon>Bacteria</taxon>
        <taxon>Bacillati</taxon>
        <taxon>Bacillota</taxon>
        <taxon>Bacilli</taxon>
        <taxon>Lactobacillales</taxon>
        <taxon>Enterococcaceae</taxon>
        <taxon>Enterococcus</taxon>
    </lineage>
</organism>
<gene>
    <name evidence="1" type="primary">uxuA</name>
    <name type="ordered locus">EF_3135</name>
</gene>
<proteinExistence type="evidence at protein level"/>
<accession>Q82ZC9</accession>
<keyword id="KW-0002">3D-structure</keyword>
<keyword id="KW-0408">Iron</keyword>
<keyword id="KW-0456">Lyase</keyword>
<keyword id="KW-0464">Manganese</keyword>
<keyword id="KW-1185">Reference proteome</keyword>
<dbReference type="EC" id="4.2.1.8" evidence="1"/>
<dbReference type="EMBL" id="AE016830">
    <property type="protein sequence ID" value="AAO82813.1"/>
    <property type="molecule type" value="Genomic_DNA"/>
</dbReference>
<dbReference type="RefSeq" id="NP_816743.1">
    <property type="nucleotide sequence ID" value="NC_004668.1"/>
</dbReference>
<dbReference type="RefSeq" id="WP_002388613.1">
    <property type="nucleotide sequence ID" value="NZ_KE136524.1"/>
</dbReference>
<dbReference type="PDB" id="1TZ9">
    <property type="method" value="X-ray"/>
    <property type="resolution" value="2.90 A"/>
    <property type="chains" value="A/B=1-357"/>
</dbReference>
<dbReference type="PDBsum" id="1TZ9"/>
<dbReference type="SMR" id="Q82ZC9"/>
<dbReference type="STRING" id="226185.EF_3135"/>
<dbReference type="EnsemblBacteria" id="AAO82813">
    <property type="protein sequence ID" value="AAO82813"/>
    <property type="gene ID" value="EF_3135"/>
</dbReference>
<dbReference type="GeneID" id="60892381"/>
<dbReference type="KEGG" id="efa:EF3135"/>
<dbReference type="PATRIC" id="fig|226185.45.peg.439"/>
<dbReference type="eggNOG" id="COG1312">
    <property type="taxonomic scope" value="Bacteria"/>
</dbReference>
<dbReference type="HOGENOM" id="CLU_058621_1_0_9"/>
<dbReference type="UniPathway" id="UPA00246"/>
<dbReference type="EvolutionaryTrace" id="Q82ZC9"/>
<dbReference type="Proteomes" id="UP000001415">
    <property type="component" value="Chromosome"/>
</dbReference>
<dbReference type="GO" id="GO:0008198">
    <property type="term" value="F:ferrous iron binding"/>
    <property type="evidence" value="ECO:0007669"/>
    <property type="project" value="TreeGrafter"/>
</dbReference>
<dbReference type="GO" id="GO:0030145">
    <property type="term" value="F:manganese ion binding"/>
    <property type="evidence" value="ECO:0007669"/>
    <property type="project" value="TreeGrafter"/>
</dbReference>
<dbReference type="GO" id="GO:0008927">
    <property type="term" value="F:mannonate dehydratase activity"/>
    <property type="evidence" value="ECO:0007669"/>
    <property type="project" value="UniProtKB-UniRule"/>
</dbReference>
<dbReference type="GO" id="GO:0042840">
    <property type="term" value="P:D-glucuronate catabolic process"/>
    <property type="evidence" value="ECO:0007669"/>
    <property type="project" value="TreeGrafter"/>
</dbReference>
<dbReference type="Gene3D" id="3.20.20.150">
    <property type="entry name" value="Divalent-metal-dependent TIM barrel enzymes"/>
    <property type="match status" value="1"/>
</dbReference>
<dbReference type="HAMAP" id="MF_00106">
    <property type="entry name" value="UxuA"/>
    <property type="match status" value="1"/>
</dbReference>
<dbReference type="InterPro" id="IPR004628">
    <property type="entry name" value="Man_deHydtase"/>
</dbReference>
<dbReference type="InterPro" id="IPR036237">
    <property type="entry name" value="Xyl_isomerase-like_sf"/>
</dbReference>
<dbReference type="NCBIfam" id="NF003027">
    <property type="entry name" value="PRK03906.1"/>
    <property type="match status" value="1"/>
</dbReference>
<dbReference type="NCBIfam" id="TIGR00695">
    <property type="entry name" value="uxuA"/>
    <property type="match status" value="1"/>
</dbReference>
<dbReference type="PANTHER" id="PTHR30387">
    <property type="entry name" value="MANNONATE DEHYDRATASE"/>
    <property type="match status" value="1"/>
</dbReference>
<dbReference type="PANTHER" id="PTHR30387:SF2">
    <property type="entry name" value="MANNONATE DEHYDRATASE"/>
    <property type="match status" value="1"/>
</dbReference>
<dbReference type="Pfam" id="PF03786">
    <property type="entry name" value="UxuA"/>
    <property type="match status" value="1"/>
</dbReference>
<dbReference type="PIRSF" id="PIRSF016049">
    <property type="entry name" value="Man_dehyd"/>
    <property type="match status" value="1"/>
</dbReference>
<dbReference type="SUPFAM" id="SSF51658">
    <property type="entry name" value="Xylose isomerase-like"/>
    <property type="match status" value="1"/>
</dbReference>